<reference key="1">
    <citation type="journal article" date="2009" name="Genome Res.">
        <title>Genome structure of a Saccharomyces cerevisiae strain widely used in bioethanol production.</title>
        <authorList>
            <person name="Argueso J.L."/>
            <person name="Carazzolle M.F."/>
            <person name="Mieczkowski P.A."/>
            <person name="Duarte F.M."/>
            <person name="Netto O.V.C."/>
            <person name="Missawa S.K."/>
            <person name="Galzerani F."/>
            <person name="Costa G.G.L."/>
            <person name="Vidal R.O."/>
            <person name="Noronha M.F."/>
            <person name="Dominska M."/>
            <person name="Andrietta M.G.S."/>
            <person name="Andrietta S.R."/>
            <person name="Cunha A.F."/>
            <person name="Gomes L.H."/>
            <person name="Tavares F.C.A."/>
            <person name="Alcarde A.R."/>
            <person name="Dietrich F.S."/>
            <person name="McCusker J.H."/>
            <person name="Petes T.D."/>
            <person name="Pereira G.A.G."/>
        </authorList>
    </citation>
    <scope>NUCLEOTIDE SEQUENCE [LARGE SCALE GENOMIC DNA]</scope>
    <source>
        <strain>JAY291</strain>
    </source>
</reference>
<evidence type="ECO:0000250" key="1"/>
<evidence type="ECO:0000305" key="2"/>
<proteinExistence type="inferred from homology"/>
<sequence length="237" mass="27852">MVLQYPQNKILVLSDHPHNFSKTQFLQDLFHCSSTGISIVKDQTWENRYYKVHFDLYIDSCKDIPVWVEEFITPECEPLRNVMAGIILITDIRQTKPQELLHQFMIAAHRNTFVVLVNVNEEVEQDEIDELNEIWSNAFTNVIEFVNWKRSKPTVNHNDYGEKLGLDRIQEIIDTHDWLNCEVLPATKIREEIPNEMPLEQIIRNLQSARLKYKSIENSSEADAFANEMADELSRYL</sequence>
<feature type="chain" id="PRO_0000399227" description="Increased recombination centers protein 6">
    <location>
        <begin position="1"/>
        <end position="237"/>
    </location>
</feature>
<accession>C7GYE7</accession>
<name>IRC6_YEAS2</name>
<comment type="function">
    <text evidence="1">Involved in gross chromosomal rearrangements (GCRs) and telomere healing.</text>
</comment>
<comment type="similarity">
    <text evidence="2">Belongs to the IRC6 family.</text>
</comment>
<keyword id="KW-0160">Chromosomal rearrangement</keyword>
<protein>
    <recommendedName>
        <fullName>Increased recombination centers protein 6</fullName>
    </recommendedName>
</protein>
<dbReference type="EMBL" id="ACFL01000453">
    <property type="protein sequence ID" value="EEU04177.1"/>
    <property type="molecule type" value="Genomic_DNA"/>
</dbReference>
<dbReference type="SMR" id="C7GYE7"/>
<dbReference type="Proteomes" id="UP000008073">
    <property type="component" value="Unassembled WGS sequence"/>
</dbReference>
<dbReference type="GO" id="GO:0030674">
    <property type="term" value="F:protein-macromolecule adaptor activity"/>
    <property type="evidence" value="ECO:0007669"/>
    <property type="project" value="TreeGrafter"/>
</dbReference>
<dbReference type="GO" id="GO:0016192">
    <property type="term" value="P:vesicle-mediated transport"/>
    <property type="evidence" value="ECO:0007669"/>
    <property type="project" value="InterPro"/>
</dbReference>
<dbReference type="FunFam" id="3.40.50.11960:FF:000002">
    <property type="entry name" value="Increased recombination centers protein 6"/>
    <property type="match status" value="1"/>
</dbReference>
<dbReference type="Gene3D" id="3.40.50.11960">
    <property type="match status" value="1"/>
</dbReference>
<dbReference type="InterPro" id="IPR034627">
    <property type="entry name" value="Irc6"/>
</dbReference>
<dbReference type="PANTHER" id="PTHR28043">
    <property type="entry name" value="INCREASED RECOMBINATION CENTERS PROTEIN 6"/>
    <property type="match status" value="1"/>
</dbReference>
<dbReference type="PANTHER" id="PTHR28043:SF1">
    <property type="entry name" value="INCREASED RECOMBINATION CENTERS PROTEIN 6"/>
    <property type="match status" value="1"/>
</dbReference>
<organism>
    <name type="scientific">Saccharomyces cerevisiae (strain JAY291)</name>
    <name type="common">Baker's yeast</name>
    <dbReference type="NCBI Taxonomy" id="574961"/>
    <lineage>
        <taxon>Eukaryota</taxon>
        <taxon>Fungi</taxon>
        <taxon>Dikarya</taxon>
        <taxon>Ascomycota</taxon>
        <taxon>Saccharomycotina</taxon>
        <taxon>Saccharomycetes</taxon>
        <taxon>Saccharomycetales</taxon>
        <taxon>Saccharomycetaceae</taxon>
        <taxon>Saccharomyces</taxon>
    </lineage>
</organism>
<gene>
    <name type="primary">IRC6</name>
    <name type="ORF">C1Q_05575</name>
</gene>